<comment type="function">
    <text evidence="1">Component of the biogenesis of lysosome-related organelles complex-1 (BLOC-1) involved in endosomal cargo sorting.</text>
</comment>
<comment type="subunit">
    <text evidence="1">Component of the biogenesis of lysosome-related organelles complex-1 (BLOC-1) composed of at least BLI1, BLS1, CNL1, KXD1, SNN1 and VAB2.</text>
</comment>
<comment type="subcellular location">
    <subcellularLocation>
        <location evidence="1">Endosome</location>
    </subcellularLocation>
</comment>
<comment type="similarity">
    <text evidence="3">Belongs to the BLI1 family.</text>
</comment>
<organism>
    <name type="scientific">Saccharomyces cerevisiae (strain FostersO)</name>
    <name type="common">Baker's yeast</name>
    <dbReference type="NCBI Taxonomy" id="764101"/>
    <lineage>
        <taxon>Eukaryota</taxon>
        <taxon>Fungi</taxon>
        <taxon>Dikarya</taxon>
        <taxon>Ascomycota</taxon>
        <taxon>Saccharomycotina</taxon>
        <taxon>Saccharomycetes</taxon>
        <taxon>Saccharomycetales</taxon>
        <taxon>Saccharomycetaceae</taxon>
        <taxon>Saccharomyces</taxon>
    </lineage>
</organism>
<evidence type="ECO:0000250" key="1"/>
<evidence type="ECO:0000255" key="2"/>
<evidence type="ECO:0000305" key="3"/>
<name>BLI1_YEASO</name>
<feature type="chain" id="PRO_0000410624" description="Biogenesis of lysosome-related organelles complex 1 subunit BLI1">
    <location>
        <begin position="1"/>
        <end position="113"/>
    </location>
</feature>
<feature type="coiled-coil region" evidence="2">
    <location>
        <begin position="57"/>
        <end position="97"/>
    </location>
</feature>
<gene>
    <name type="primary">BLI1</name>
    <name type="ORF">FOSTERSO_2848</name>
</gene>
<protein>
    <recommendedName>
        <fullName>Biogenesis of lysosome-related organelles complex 1 subunit BLI1</fullName>
        <shortName>BLOC-1 subunit BLI1</shortName>
    </recommendedName>
    <alternativeName>
        <fullName>BLOC-1 interactor 1</fullName>
    </alternativeName>
</protein>
<accession>E7NK05</accession>
<reference key="1">
    <citation type="journal article" date="2011" name="PLoS Genet.">
        <title>Whole-genome comparison reveals novel genetic elements that characterize the genome of industrial strains of Saccharomyces cerevisiae.</title>
        <authorList>
            <person name="Borneman A.R."/>
            <person name="Desany B.A."/>
            <person name="Riches D."/>
            <person name="Affourtit J.P."/>
            <person name="Forgan A.H."/>
            <person name="Pretorius I.S."/>
            <person name="Egholm M."/>
            <person name="Chambers P.J."/>
        </authorList>
    </citation>
    <scope>NUCLEOTIDE SEQUENCE [LARGE SCALE GENOMIC DNA]</scope>
    <source>
        <strain>FostersO</strain>
    </source>
</reference>
<proteinExistence type="inferred from homology"/>
<dbReference type="EMBL" id="AEEZ01000060">
    <property type="protein sequence ID" value="EGA61530.1"/>
    <property type="molecule type" value="Genomic_DNA"/>
</dbReference>
<dbReference type="HOGENOM" id="CLU_168467_0_0_1"/>
<dbReference type="OMA" id="AVANHEW"/>
<dbReference type="GO" id="GO:0005768">
    <property type="term" value="C:endosome"/>
    <property type="evidence" value="ECO:0007669"/>
    <property type="project" value="UniProtKB-SubCell"/>
</dbReference>
<dbReference type="InterPro" id="IPR020491">
    <property type="entry name" value="BLI1"/>
</dbReference>
<dbReference type="Pfam" id="PF17324">
    <property type="entry name" value="BLI1"/>
    <property type="match status" value="1"/>
</dbReference>
<keyword id="KW-0175">Coiled coil</keyword>
<keyword id="KW-0967">Endosome</keyword>
<keyword id="KW-0813">Transport</keyword>
<sequence>MGEQNKLYYDVEKLVNSLQESFDLDCAQSVSLFTSKSRSNEAWLEELENKFKLKDDVELDDVENLRAEIDMKLNMLEDKVSYYERLYKELEEFQNEIKIKTVVNNRRQSRTPK</sequence>